<name>CRTQ_STAAB</name>
<organism>
    <name type="scientific">Staphylococcus aureus (strain bovine RF122 / ET3-1)</name>
    <dbReference type="NCBI Taxonomy" id="273036"/>
    <lineage>
        <taxon>Bacteria</taxon>
        <taxon>Bacillati</taxon>
        <taxon>Bacillota</taxon>
        <taxon>Bacilli</taxon>
        <taxon>Bacillales</taxon>
        <taxon>Staphylococcaceae</taxon>
        <taxon>Staphylococcus</taxon>
    </lineage>
</organism>
<comment type="function">
    <text evidence="1">Catalyzes the glycosylation of 4,4'-diaponeurosporenoate, i.e. the esterification of glucose at the C1'' position with the carboxyl group of 4,4'-diaponeurosporenic acid, to form glycosyl-4,4'-diaponeurosporenoate. This is a step in the biosynthesis of staphyloxanthin, an orange pigment present in most staphylococci strains (By similarity).</text>
</comment>
<comment type="pathway">
    <text>Carotenoid biosynthesis; staphyloxanthin biosynthesis; staphyloxanthin from farnesyl diphosphate: step 4/5.</text>
</comment>
<comment type="subcellular location">
    <subcellularLocation>
        <location evidence="3">Cell membrane</location>
        <topology evidence="3">Multi-pass membrane protein</topology>
    </subcellularLocation>
</comment>
<comment type="similarity">
    <text evidence="3">Belongs to the glycosyltransferase 2 family. CrtQ subfamily.</text>
</comment>
<evidence type="ECO:0000250" key="1"/>
<evidence type="ECO:0000255" key="2"/>
<evidence type="ECO:0000305" key="3"/>
<sequence>MKWLSRILTVIVAMSMACGALIFNRRHQLKAKTLNFNHKSLTIIIPARNEEKRIGHLLHSIIQQQVPVDVIVMNDGSTDETARVARSYGATVVDVVDDADGKWYGKSHACYQGVTHACTNRIAFVDADVTFLRKDAVETLINQYQLQGEKGLLSVQPYHITKRFYEGFSAIFNLMTVVGMNVFSTLDDGRTNQHAFGPVTLTNKEDYYATGGHKSANRHIIEGFALGSAYTSQSLPVTVYEGFPFVAFCMYQEGFQSLQEGWTKHLSTGAGGTKPKIMAAIVLWLFGSIASILGLCLSLKYRQMSVGKMLTVYLSYTTQFIYLHRRVGQFSNLLMVCHPLLFMFFTKIFIQSWKQTHRYGVVEWKGRQYSISKEQ</sequence>
<feature type="chain" id="PRO_0000284858" description="4,4'-diaponeurosporenoate glycosyltransferase">
    <location>
        <begin position="1"/>
        <end position="375"/>
    </location>
</feature>
<feature type="transmembrane region" description="Helical" evidence="2">
    <location>
        <begin position="3"/>
        <end position="23"/>
    </location>
</feature>
<feature type="transmembrane region" description="Helical" evidence="2">
    <location>
        <begin position="164"/>
        <end position="184"/>
    </location>
</feature>
<feature type="transmembrane region" description="Helical" evidence="2">
    <location>
        <begin position="277"/>
        <end position="297"/>
    </location>
</feature>
<feature type="transmembrane region" description="Helical" evidence="2">
    <location>
        <begin position="330"/>
        <end position="350"/>
    </location>
</feature>
<reference key="1">
    <citation type="journal article" date="2007" name="PLoS ONE">
        <title>Molecular correlates of host specialization in Staphylococcus aureus.</title>
        <authorList>
            <person name="Herron-Olson L."/>
            <person name="Fitzgerald J.R."/>
            <person name="Musser J.M."/>
            <person name="Kapur V."/>
        </authorList>
    </citation>
    <scope>NUCLEOTIDE SEQUENCE [LARGE SCALE GENOMIC DNA]</scope>
    <source>
        <strain>bovine RF122 / ET3-1</strain>
    </source>
</reference>
<gene>
    <name type="primary">crtQ</name>
    <name type="ordered locus">SAB2436c</name>
</gene>
<dbReference type="EC" id="2.4.1.-"/>
<dbReference type="EMBL" id="AJ938182">
    <property type="protein sequence ID" value="CAI82124.1"/>
    <property type="molecule type" value="Genomic_DNA"/>
</dbReference>
<dbReference type="RefSeq" id="WP_000871714.1">
    <property type="nucleotide sequence ID" value="NC_007622.1"/>
</dbReference>
<dbReference type="SMR" id="Q2YWE6"/>
<dbReference type="CAZy" id="GT2">
    <property type="family name" value="Glycosyltransferase Family 2"/>
</dbReference>
<dbReference type="KEGG" id="sab:SAB2436c"/>
<dbReference type="HOGENOM" id="CLU_038143_1_0_9"/>
<dbReference type="UniPathway" id="UPA00029">
    <property type="reaction ID" value="UER00559"/>
</dbReference>
<dbReference type="GO" id="GO:0005886">
    <property type="term" value="C:plasma membrane"/>
    <property type="evidence" value="ECO:0007669"/>
    <property type="project" value="UniProtKB-SubCell"/>
</dbReference>
<dbReference type="GO" id="GO:0016757">
    <property type="term" value="F:glycosyltransferase activity"/>
    <property type="evidence" value="ECO:0007669"/>
    <property type="project" value="UniProtKB-KW"/>
</dbReference>
<dbReference type="GO" id="GO:0016117">
    <property type="term" value="P:carotenoid biosynthetic process"/>
    <property type="evidence" value="ECO:0007669"/>
    <property type="project" value="UniProtKB-KW"/>
</dbReference>
<dbReference type="CDD" id="cd00761">
    <property type="entry name" value="Glyco_tranf_GTA_type"/>
    <property type="match status" value="1"/>
</dbReference>
<dbReference type="Gene3D" id="3.90.550.10">
    <property type="entry name" value="Spore Coat Polysaccharide Biosynthesis Protein SpsA, Chain A"/>
    <property type="match status" value="1"/>
</dbReference>
<dbReference type="InterPro" id="IPR001173">
    <property type="entry name" value="Glyco_trans_2-like"/>
</dbReference>
<dbReference type="InterPro" id="IPR029044">
    <property type="entry name" value="Nucleotide-diphossugar_trans"/>
</dbReference>
<dbReference type="PANTHER" id="PTHR43646">
    <property type="entry name" value="GLYCOSYLTRANSFERASE"/>
    <property type="match status" value="1"/>
</dbReference>
<dbReference type="PANTHER" id="PTHR43646:SF2">
    <property type="entry name" value="GLYCOSYLTRANSFERASE 2-LIKE DOMAIN-CONTAINING PROTEIN"/>
    <property type="match status" value="1"/>
</dbReference>
<dbReference type="Pfam" id="PF00535">
    <property type="entry name" value="Glycos_transf_2"/>
    <property type="match status" value="1"/>
</dbReference>
<dbReference type="SUPFAM" id="SSF53448">
    <property type="entry name" value="Nucleotide-diphospho-sugar transferases"/>
    <property type="match status" value="1"/>
</dbReference>
<accession>Q2YWE6</accession>
<keyword id="KW-0125">Carotenoid biosynthesis</keyword>
<keyword id="KW-1003">Cell membrane</keyword>
<keyword id="KW-0328">Glycosyltransferase</keyword>
<keyword id="KW-0472">Membrane</keyword>
<keyword id="KW-0808">Transferase</keyword>
<keyword id="KW-0812">Transmembrane</keyword>
<keyword id="KW-1133">Transmembrane helix</keyword>
<proteinExistence type="inferred from homology"/>
<protein>
    <recommendedName>
        <fullName>4,4'-diaponeurosporenoate glycosyltransferase</fullName>
        <ecNumber>2.4.1.-</ecNumber>
    </recommendedName>
</protein>